<comment type="function">
    <text evidence="1">Catalyzes the formation of N(7)-methylguanine at position 46 (m7G46) in tRNA.</text>
</comment>
<comment type="catalytic activity">
    <reaction evidence="1">
        <text>guanosine(46) in tRNA + S-adenosyl-L-methionine = N(7)-methylguanosine(46) in tRNA + S-adenosyl-L-homocysteine</text>
        <dbReference type="Rhea" id="RHEA:42708"/>
        <dbReference type="Rhea" id="RHEA-COMP:10188"/>
        <dbReference type="Rhea" id="RHEA-COMP:10189"/>
        <dbReference type="ChEBI" id="CHEBI:57856"/>
        <dbReference type="ChEBI" id="CHEBI:59789"/>
        <dbReference type="ChEBI" id="CHEBI:74269"/>
        <dbReference type="ChEBI" id="CHEBI:74480"/>
        <dbReference type="EC" id="2.1.1.33"/>
    </reaction>
</comment>
<comment type="pathway">
    <text evidence="1">tRNA modification; N(7)-methylguanine-tRNA biosynthesis.</text>
</comment>
<comment type="similarity">
    <text evidence="1">Belongs to the class I-like SAM-binding methyltransferase superfamily. TrmB family.</text>
</comment>
<keyword id="KW-0489">Methyltransferase</keyword>
<keyword id="KW-0949">S-adenosyl-L-methionine</keyword>
<keyword id="KW-0808">Transferase</keyword>
<keyword id="KW-0819">tRNA processing</keyword>
<feature type="chain" id="PRO_1000213438" description="tRNA (guanine-N(7)-)-methyltransferase">
    <location>
        <begin position="1"/>
        <end position="217"/>
    </location>
</feature>
<feature type="region of interest" description="Interaction with RNA" evidence="1">
    <location>
        <begin position="129"/>
        <end position="134"/>
    </location>
</feature>
<feature type="binding site" evidence="1">
    <location>
        <position position="43"/>
    </location>
    <ligand>
        <name>S-adenosyl-L-methionine</name>
        <dbReference type="ChEBI" id="CHEBI:59789"/>
    </ligand>
</feature>
<feature type="binding site" evidence="1">
    <location>
        <position position="68"/>
    </location>
    <ligand>
        <name>S-adenosyl-L-methionine</name>
        <dbReference type="ChEBI" id="CHEBI:59789"/>
    </ligand>
</feature>
<feature type="binding site" evidence="1">
    <location>
        <position position="101"/>
    </location>
    <ligand>
        <name>S-adenosyl-L-methionine</name>
        <dbReference type="ChEBI" id="CHEBI:59789"/>
    </ligand>
</feature>
<feature type="binding site" evidence="1">
    <location>
        <position position="123"/>
    </location>
    <ligand>
        <name>S-adenosyl-L-methionine</name>
        <dbReference type="ChEBI" id="CHEBI:59789"/>
    </ligand>
</feature>
<feature type="binding site" evidence="1">
    <location>
        <position position="127"/>
    </location>
    <ligand>
        <name>substrate</name>
    </ligand>
</feature>
<feature type="binding site" evidence="1">
    <location>
        <position position="159"/>
    </location>
    <ligand>
        <name>substrate</name>
    </ligand>
</feature>
<feature type="binding site" evidence="1">
    <location>
        <begin position="196"/>
        <end position="199"/>
    </location>
    <ligand>
        <name>substrate</name>
    </ligand>
</feature>
<evidence type="ECO:0000255" key="1">
    <source>
        <dbReference type="HAMAP-Rule" id="MF_01057"/>
    </source>
</evidence>
<dbReference type="EC" id="2.1.1.33" evidence="1"/>
<dbReference type="EMBL" id="CP001083">
    <property type="protein sequence ID" value="ACQ53920.1"/>
    <property type="molecule type" value="Genomic_DNA"/>
</dbReference>
<dbReference type="RefSeq" id="WP_003359782.1">
    <property type="nucleotide sequence ID" value="NC_012658.1"/>
</dbReference>
<dbReference type="SMR" id="C3L0Q0"/>
<dbReference type="KEGG" id="cbi:CLJ_B0576"/>
<dbReference type="HOGENOM" id="CLU_050910_2_1_9"/>
<dbReference type="UniPathway" id="UPA00989"/>
<dbReference type="Proteomes" id="UP000002333">
    <property type="component" value="Chromosome"/>
</dbReference>
<dbReference type="GO" id="GO:0043527">
    <property type="term" value="C:tRNA methyltransferase complex"/>
    <property type="evidence" value="ECO:0007669"/>
    <property type="project" value="TreeGrafter"/>
</dbReference>
<dbReference type="GO" id="GO:0008176">
    <property type="term" value="F:tRNA (guanine(46)-N7)-methyltransferase activity"/>
    <property type="evidence" value="ECO:0007669"/>
    <property type="project" value="UniProtKB-UniRule"/>
</dbReference>
<dbReference type="Gene3D" id="3.40.50.150">
    <property type="entry name" value="Vaccinia Virus protein VP39"/>
    <property type="match status" value="1"/>
</dbReference>
<dbReference type="HAMAP" id="MF_01057">
    <property type="entry name" value="tRNA_methyltr_TrmB"/>
    <property type="match status" value="1"/>
</dbReference>
<dbReference type="InterPro" id="IPR029063">
    <property type="entry name" value="SAM-dependent_MTases_sf"/>
</dbReference>
<dbReference type="InterPro" id="IPR003358">
    <property type="entry name" value="tRNA_(Gua-N-7)_MeTrfase_Trmb"/>
</dbReference>
<dbReference type="InterPro" id="IPR055361">
    <property type="entry name" value="tRNA_methyltr_TrmB_bact"/>
</dbReference>
<dbReference type="NCBIfam" id="NF001080">
    <property type="entry name" value="PRK00121.2-2"/>
    <property type="match status" value="1"/>
</dbReference>
<dbReference type="NCBIfam" id="TIGR00091">
    <property type="entry name" value="tRNA (guanosine(46)-N7)-methyltransferase TrmB"/>
    <property type="match status" value="1"/>
</dbReference>
<dbReference type="PANTHER" id="PTHR23417">
    <property type="entry name" value="3-DEOXY-D-MANNO-OCTULOSONIC-ACID TRANSFERASE/TRNA GUANINE-N 7 - -METHYLTRANSFERASE"/>
    <property type="match status" value="1"/>
</dbReference>
<dbReference type="PANTHER" id="PTHR23417:SF14">
    <property type="entry name" value="PENTACOTRIPEPTIDE-REPEAT REGION OF PRORP DOMAIN-CONTAINING PROTEIN"/>
    <property type="match status" value="1"/>
</dbReference>
<dbReference type="Pfam" id="PF02390">
    <property type="entry name" value="Methyltransf_4"/>
    <property type="match status" value="1"/>
</dbReference>
<dbReference type="SUPFAM" id="SSF53335">
    <property type="entry name" value="S-adenosyl-L-methionine-dependent methyltransferases"/>
    <property type="match status" value="1"/>
</dbReference>
<dbReference type="PROSITE" id="PS51625">
    <property type="entry name" value="SAM_MT_TRMB"/>
    <property type="match status" value="1"/>
</dbReference>
<proteinExistence type="inferred from homology"/>
<sequence length="217" mass="26258">MRLRKKWWARPEIEASDKFADEPKELRGKWNKKFNNNNDIHLELGCGRGGFISQLVEKNKDINYVGIDLKDEVIVYAIRKVKEKEEEVKREFKNIKFITMNIMGIAEVFDKNEISKIYINFCNPWPKERHNKRRLTHTKLLTEYKKFIKPNTEIWFKTDDKELFEDSQEYFKESGFNIEYITYDLHNSDFKENIKTEYETKFETMGMKIMFLKARLL</sequence>
<protein>
    <recommendedName>
        <fullName evidence="1">tRNA (guanine-N(7)-)-methyltransferase</fullName>
        <ecNumber evidence="1">2.1.1.33</ecNumber>
    </recommendedName>
    <alternativeName>
        <fullName evidence="1">tRNA (guanine(46)-N(7))-methyltransferase</fullName>
    </alternativeName>
    <alternativeName>
        <fullName evidence="1">tRNA(m7G46)-methyltransferase</fullName>
    </alternativeName>
</protein>
<name>TRMB_CLOB6</name>
<organism>
    <name type="scientific">Clostridium botulinum (strain 657 / Type Ba4)</name>
    <dbReference type="NCBI Taxonomy" id="515621"/>
    <lineage>
        <taxon>Bacteria</taxon>
        <taxon>Bacillati</taxon>
        <taxon>Bacillota</taxon>
        <taxon>Clostridia</taxon>
        <taxon>Eubacteriales</taxon>
        <taxon>Clostridiaceae</taxon>
        <taxon>Clostridium</taxon>
    </lineage>
</organism>
<reference key="1">
    <citation type="submission" date="2008-05" db="EMBL/GenBank/DDBJ databases">
        <title>Genome sequence of Clostridium botulinum Ba4 strain 657.</title>
        <authorList>
            <person name="Shrivastava S."/>
            <person name="Brown J.L."/>
            <person name="Bruce D."/>
            <person name="Detter C."/>
            <person name="Munk C."/>
            <person name="Smith L.A."/>
            <person name="Smith T.J."/>
            <person name="Sutton G."/>
            <person name="Brettin T.S."/>
        </authorList>
    </citation>
    <scope>NUCLEOTIDE SEQUENCE [LARGE SCALE GENOMIC DNA]</scope>
    <source>
        <strain>657 / Type Ba4</strain>
    </source>
</reference>
<gene>
    <name evidence="1" type="primary">trmB</name>
    <name type="ordered locus">CLJ_B0576</name>
</gene>
<accession>C3L0Q0</accession>